<name>EFPL_PECCP</name>
<comment type="similarity">
    <text evidence="1">Belongs to the elongation factor P family.</text>
</comment>
<organism>
    <name type="scientific">Pectobacterium carotovorum subsp. carotovorum (strain PC1)</name>
    <dbReference type="NCBI Taxonomy" id="561230"/>
    <lineage>
        <taxon>Bacteria</taxon>
        <taxon>Pseudomonadati</taxon>
        <taxon>Pseudomonadota</taxon>
        <taxon>Gammaproteobacteria</taxon>
        <taxon>Enterobacterales</taxon>
        <taxon>Pectobacteriaceae</taxon>
        <taxon>Pectobacterium</taxon>
    </lineage>
</organism>
<evidence type="ECO:0000255" key="1">
    <source>
        <dbReference type="HAMAP-Rule" id="MF_00646"/>
    </source>
</evidence>
<protein>
    <recommendedName>
        <fullName evidence="1">Elongation factor P-like protein</fullName>
    </recommendedName>
</protein>
<accession>C6DEK5</accession>
<reference key="1">
    <citation type="submission" date="2009-07" db="EMBL/GenBank/DDBJ databases">
        <title>Complete sequence of Pectobacterium carotovorum subsp. carotovorum PC1.</title>
        <authorList>
            <consortium name="US DOE Joint Genome Institute"/>
            <person name="Lucas S."/>
            <person name="Copeland A."/>
            <person name="Lapidus A."/>
            <person name="Glavina del Rio T."/>
            <person name="Tice H."/>
            <person name="Bruce D."/>
            <person name="Goodwin L."/>
            <person name="Pitluck S."/>
            <person name="Munk A.C."/>
            <person name="Brettin T."/>
            <person name="Detter J.C."/>
            <person name="Han C."/>
            <person name="Tapia R."/>
            <person name="Larimer F."/>
            <person name="Land M."/>
            <person name="Hauser L."/>
            <person name="Kyrpides N."/>
            <person name="Mikhailova N."/>
            <person name="Balakrishnan V."/>
            <person name="Glasner J."/>
            <person name="Perna N.T."/>
        </authorList>
    </citation>
    <scope>NUCLEOTIDE SEQUENCE [LARGE SCALE GENOMIC DNA]</scope>
    <source>
        <strain>PC1</strain>
    </source>
</reference>
<sequence>MARANEIKRGMVVNYNDKLLLVKDIDVQSPSARGASTLYKMRFSDVRTGLKVEERFKGDDILDTITLTRRTVTFSYIDGDEYVFMDDEDYTPYLFKKDQIEEELLFIPEGGMPGIQVLSWDGQIIALELPQTVDLEIVDTAPGIKGASASARNKPATMSTGLTIPVPEYLSAGEKIRIHIPERRYMGRAD</sequence>
<dbReference type="EMBL" id="CP001657">
    <property type="protein sequence ID" value="ACT12690.1"/>
    <property type="molecule type" value="Genomic_DNA"/>
</dbReference>
<dbReference type="SMR" id="C6DEK5"/>
<dbReference type="STRING" id="561230.PC1_1649"/>
<dbReference type="KEGG" id="pct:PC1_1649"/>
<dbReference type="eggNOG" id="COG0231">
    <property type="taxonomic scope" value="Bacteria"/>
</dbReference>
<dbReference type="HOGENOM" id="CLU_074944_2_0_6"/>
<dbReference type="OrthoDB" id="5599402at2"/>
<dbReference type="Proteomes" id="UP000002736">
    <property type="component" value="Chromosome"/>
</dbReference>
<dbReference type="GO" id="GO:0005737">
    <property type="term" value="C:cytoplasm"/>
    <property type="evidence" value="ECO:0007669"/>
    <property type="project" value="InterPro"/>
</dbReference>
<dbReference type="GO" id="GO:0003746">
    <property type="term" value="F:translation elongation factor activity"/>
    <property type="evidence" value="ECO:0007669"/>
    <property type="project" value="UniProtKB-UniRule"/>
</dbReference>
<dbReference type="GO" id="GO:0043043">
    <property type="term" value="P:peptide biosynthetic process"/>
    <property type="evidence" value="ECO:0007669"/>
    <property type="project" value="InterPro"/>
</dbReference>
<dbReference type="CDD" id="cd04470">
    <property type="entry name" value="S1_EF-P_repeat_1"/>
    <property type="match status" value="1"/>
</dbReference>
<dbReference type="FunFam" id="2.40.50.140:FF:000004">
    <property type="entry name" value="Elongation factor P"/>
    <property type="match status" value="1"/>
</dbReference>
<dbReference type="FunFam" id="2.30.30.30:FF:000011">
    <property type="entry name" value="Elongation factor P-like protein"/>
    <property type="match status" value="1"/>
</dbReference>
<dbReference type="FunFam" id="2.40.50.140:FF:000053">
    <property type="entry name" value="Elongation factor P-like protein"/>
    <property type="match status" value="1"/>
</dbReference>
<dbReference type="Gene3D" id="2.30.30.30">
    <property type="match status" value="1"/>
</dbReference>
<dbReference type="Gene3D" id="2.40.50.140">
    <property type="entry name" value="Nucleic acid-binding proteins"/>
    <property type="match status" value="2"/>
</dbReference>
<dbReference type="HAMAP" id="MF_00646">
    <property type="entry name" value="EFP"/>
    <property type="match status" value="1"/>
</dbReference>
<dbReference type="InterPro" id="IPR015365">
    <property type="entry name" value="Elong-fact-P_C"/>
</dbReference>
<dbReference type="InterPro" id="IPR012340">
    <property type="entry name" value="NA-bd_OB-fold"/>
</dbReference>
<dbReference type="InterPro" id="IPR014722">
    <property type="entry name" value="Rib_uL2_dom2"/>
</dbReference>
<dbReference type="InterPro" id="IPR020599">
    <property type="entry name" value="Transl_elong_fac_P/YeiP"/>
</dbReference>
<dbReference type="InterPro" id="IPR013185">
    <property type="entry name" value="Transl_elong_KOW-like"/>
</dbReference>
<dbReference type="InterPro" id="IPR011897">
    <property type="entry name" value="Transl_elong_p-like_YeiP"/>
</dbReference>
<dbReference type="InterPro" id="IPR001059">
    <property type="entry name" value="Transl_elong_P/YeiP_cen"/>
</dbReference>
<dbReference type="InterPro" id="IPR013852">
    <property type="entry name" value="Transl_elong_P/YeiP_CS"/>
</dbReference>
<dbReference type="InterPro" id="IPR008991">
    <property type="entry name" value="Translation_prot_SH3-like_sf"/>
</dbReference>
<dbReference type="NCBIfam" id="NF001810">
    <property type="entry name" value="PRK00529.1"/>
    <property type="match status" value="1"/>
</dbReference>
<dbReference type="NCBIfam" id="NF003392">
    <property type="entry name" value="PRK04542.1"/>
    <property type="match status" value="1"/>
</dbReference>
<dbReference type="NCBIfam" id="TIGR02178">
    <property type="entry name" value="yeiP"/>
    <property type="match status" value="1"/>
</dbReference>
<dbReference type="PANTHER" id="PTHR30053">
    <property type="entry name" value="ELONGATION FACTOR P"/>
    <property type="match status" value="1"/>
</dbReference>
<dbReference type="PANTHER" id="PTHR30053:SF14">
    <property type="entry name" value="TRANSLATION ELONGATION FACTOR KOW-LIKE DOMAIN-CONTAINING PROTEIN"/>
    <property type="match status" value="1"/>
</dbReference>
<dbReference type="Pfam" id="PF01132">
    <property type="entry name" value="EFP"/>
    <property type="match status" value="1"/>
</dbReference>
<dbReference type="Pfam" id="PF08207">
    <property type="entry name" value="EFP_N"/>
    <property type="match status" value="1"/>
</dbReference>
<dbReference type="Pfam" id="PF09285">
    <property type="entry name" value="Elong-fact-P_C"/>
    <property type="match status" value="1"/>
</dbReference>
<dbReference type="PIRSF" id="PIRSF005901">
    <property type="entry name" value="EF-P"/>
    <property type="match status" value="1"/>
</dbReference>
<dbReference type="SMART" id="SM01185">
    <property type="entry name" value="EFP"/>
    <property type="match status" value="1"/>
</dbReference>
<dbReference type="SMART" id="SM00841">
    <property type="entry name" value="Elong-fact-P_C"/>
    <property type="match status" value="1"/>
</dbReference>
<dbReference type="SUPFAM" id="SSF50249">
    <property type="entry name" value="Nucleic acid-binding proteins"/>
    <property type="match status" value="2"/>
</dbReference>
<dbReference type="SUPFAM" id="SSF50104">
    <property type="entry name" value="Translation proteins SH3-like domain"/>
    <property type="match status" value="1"/>
</dbReference>
<dbReference type="PROSITE" id="PS01275">
    <property type="entry name" value="EFP"/>
    <property type="match status" value="1"/>
</dbReference>
<proteinExistence type="inferred from homology"/>
<gene>
    <name type="ordered locus">PC1_1649</name>
</gene>
<feature type="chain" id="PRO_1000212387" description="Elongation factor P-like protein">
    <location>
        <begin position="1"/>
        <end position="190"/>
    </location>
</feature>